<keyword id="KW-0067">ATP-binding</keyword>
<keyword id="KW-0418">Kinase</keyword>
<keyword id="KW-0547">Nucleotide-binding</keyword>
<keyword id="KW-1185">Reference proteome</keyword>
<keyword id="KW-0808">Transferase</keyword>
<organism>
    <name type="scientific">Xenopus tropicalis</name>
    <name type="common">Western clawed frog</name>
    <name type="synonym">Silurana tropicalis</name>
    <dbReference type="NCBI Taxonomy" id="8364"/>
    <lineage>
        <taxon>Eukaryota</taxon>
        <taxon>Metazoa</taxon>
        <taxon>Chordata</taxon>
        <taxon>Craniata</taxon>
        <taxon>Vertebrata</taxon>
        <taxon>Euteleostomi</taxon>
        <taxon>Amphibia</taxon>
        <taxon>Batrachia</taxon>
        <taxon>Anura</taxon>
        <taxon>Pipoidea</taxon>
        <taxon>Pipidae</taxon>
        <taxon>Xenopodinae</taxon>
        <taxon>Xenopus</taxon>
        <taxon>Silurana</taxon>
    </lineage>
</organism>
<accession>B1H116</accession>
<name>UCK2_XENTR</name>
<evidence type="ECO:0000250" key="1">
    <source>
        <dbReference type="UniProtKB" id="Q9BZX2"/>
    </source>
</evidence>
<evidence type="ECO:0000256" key="2">
    <source>
        <dbReference type="SAM" id="MobiDB-lite"/>
    </source>
</evidence>
<evidence type="ECO:0000305" key="3"/>
<protein>
    <recommendedName>
        <fullName>Uridine-cytidine kinase 2</fullName>
        <shortName>UCK 2</shortName>
        <ecNumber evidence="1">2.7.1.48</ecNumber>
    </recommendedName>
    <alternativeName>
        <fullName>Cytidine monophosphokinase 2</fullName>
    </alternativeName>
    <alternativeName>
        <fullName>Uridine monophosphokinase 2</fullName>
    </alternativeName>
</protein>
<sequence length="261" mass="29498">MAGDSEQALPKHSPQNGQPFLIGVSGGTASGKSSVCSKIVQLLGQNEVDHHQKQVVMLSQDSFYRILTPEQKSKALKGQFNFDHPDAFDNELILKTLKELMEGKTVQIPVYDFVTHSRKEETLVVYPADVVLFEGILAFYMQEIRDMFQMKLFVDTDADTRLSRRVLRDINERGRDLEQVLTQYITFVKPAFEEFCLPTKKYADVIIPRGADNVVAINLIVQHIQDILNGGLTKRQTNGYTNGFTSPRTRHPSDSNSSRPH</sequence>
<reference key="1">
    <citation type="submission" date="2008-04" db="EMBL/GenBank/DDBJ databases">
        <authorList>
            <consortium name="NIH - Xenopus Gene Collection (XGC) project"/>
        </authorList>
    </citation>
    <scope>NUCLEOTIDE SEQUENCE [LARGE SCALE MRNA]</scope>
    <source>
        <tissue>Embryo</tissue>
    </source>
</reference>
<feature type="chain" id="PRO_0000346106" description="Uridine-cytidine kinase 2">
    <location>
        <begin position="1"/>
        <end position="261"/>
    </location>
</feature>
<feature type="region of interest" description="Disordered" evidence="2">
    <location>
        <begin position="1"/>
        <end position="24"/>
    </location>
</feature>
<feature type="region of interest" description="Disordered" evidence="2">
    <location>
        <begin position="238"/>
        <end position="261"/>
    </location>
</feature>
<feature type="compositionally biased region" description="Polar residues" evidence="2">
    <location>
        <begin position="238"/>
        <end position="247"/>
    </location>
</feature>
<feature type="binding site" evidence="1">
    <location>
        <begin position="26"/>
        <end position="34"/>
    </location>
    <ligand>
        <name>ATP</name>
        <dbReference type="ChEBI" id="CHEBI:30616"/>
    </ligand>
</feature>
<feature type="binding site" evidence="1">
    <location>
        <position position="83"/>
    </location>
    <ligand>
        <name>substrate</name>
    </ligand>
</feature>
<feature type="binding site" evidence="1">
    <location>
        <position position="111"/>
    </location>
    <ligand>
        <name>substrate</name>
    </ligand>
</feature>
<feature type="binding site" evidence="1">
    <location>
        <position position="116"/>
    </location>
    <ligand>
        <name>substrate</name>
    </ligand>
</feature>
<feature type="binding site" evidence="1">
    <location>
        <position position="165"/>
    </location>
    <ligand>
        <name>substrate</name>
    </ligand>
</feature>
<feature type="binding site" evidence="1">
    <location>
        <position position="175"/>
    </location>
    <ligand>
        <name>substrate</name>
    </ligand>
</feature>
<feature type="binding site" evidence="1">
    <location>
        <position position="183"/>
    </location>
    <ligand>
        <name>substrate</name>
    </ligand>
</feature>
<feature type="binding site" evidence="1">
    <location>
        <position position="212"/>
    </location>
    <ligand>
        <name>ATP</name>
        <dbReference type="ChEBI" id="CHEBI:30616"/>
    </ligand>
</feature>
<proteinExistence type="evidence at transcript level"/>
<comment type="function">
    <text evidence="1">Phosphorylates uridine and cytidine to uridine monophosphate and cytidine monophosphate. Does not phosphorylate deoxyribonucleosides or purine ribonucleosides. Can use ATP or GTP as a phosphate donor.</text>
</comment>
<comment type="catalytic activity">
    <reaction evidence="1">
        <text>uridine + ATP = UMP + ADP + H(+)</text>
        <dbReference type="Rhea" id="RHEA:16825"/>
        <dbReference type="ChEBI" id="CHEBI:15378"/>
        <dbReference type="ChEBI" id="CHEBI:16704"/>
        <dbReference type="ChEBI" id="CHEBI:30616"/>
        <dbReference type="ChEBI" id="CHEBI:57865"/>
        <dbReference type="ChEBI" id="CHEBI:456216"/>
        <dbReference type="EC" id="2.7.1.48"/>
    </reaction>
</comment>
<comment type="catalytic activity">
    <reaction evidence="1">
        <text>cytidine + ATP = CMP + ADP + H(+)</text>
        <dbReference type="Rhea" id="RHEA:24674"/>
        <dbReference type="ChEBI" id="CHEBI:15378"/>
        <dbReference type="ChEBI" id="CHEBI:17562"/>
        <dbReference type="ChEBI" id="CHEBI:30616"/>
        <dbReference type="ChEBI" id="CHEBI:60377"/>
        <dbReference type="ChEBI" id="CHEBI:456216"/>
        <dbReference type="EC" id="2.7.1.48"/>
    </reaction>
</comment>
<comment type="pathway">
    <text evidence="1">Pyrimidine metabolism; CTP biosynthesis via salvage pathway; CTP from cytidine: step 1/3.</text>
</comment>
<comment type="pathway">
    <text evidence="1">Pyrimidine metabolism; UMP biosynthesis via salvage pathway; UMP from uridine: step 1/1.</text>
</comment>
<comment type="subunit">
    <text evidence="1">Homotetramer.</text>
</comment>
<comment type="similarity">
    <text evidence="3">Belongs to the uridine kinase family.</text>
</comment>
<gene>
    <name type="primary">uck2</name>
</gene>
<dbReference type="EC" id="2.7.1.48" evidence="1"/>
<dbReference type="EMBL" id="BC160433">
    <property type="protein sequence ID" value="AAI60433.1"/>
    <property type="molecule type" value="mRNA"/>
</dbReference>
<dbReference type="EMBL" id="BC161596">
    <property type="protein sequence ID" value="AAI61596.1"/>
    <property type="molecule type" value="mRNA"/>
</dbReference>
<dbReference type="RefSeq" id="NP_001120241.1">
    <property type="nucleotide sequence ID" value="NM_001126769.1"/>
</dbReference>
<dbReference type="SMR" id="B1H116"/>
<dbReference type="FunCoup" id="B1H116">
    <property type="interactions" value="252"/>
</dbReference>
<dbReference type="STRING" id="8364.ENSXETP00000008517"/>
<dbReference type="PaxDb" id="8364-ENSXETP00000037794"/>
<dbReference type="GeneID" id="100145292"/>
<dbReference type="KEGG" id="xtr:100145292"/>
<dbReference type="AGR" id="Xenbase:XB-GENE-942591"/>
<dbReference type="CTD" id="7371"/>
<dbReference type="Xenbase" id="XB-GENE-942591">
    <property type="gene designation" value="uck2"/>
</dbReference>
<dbReference type="eggNOG" id="KOG4203">
    <property type="taxonomic scope" value="Eukaryota"/>
</dbReference>
<dbReference type="HOGENOM" id="CLU_021278_1_1_1"/>
<dbReference type="InParanoid" id="B1H116"/>
<dbReference type="OMA" id="HRQPFLI"/>
<dbReference type="OrthoDB" id="10257085at2759"/>
<dbReference type="PhylomeDB" id="B1H116"/>
<dbReference type="Reactome" id="R-XTR-73614">
    <property type="pathway name" value="Pyrimidine salvage"/>
</dbReference>
<dbReference type="UniPathway" id="UPA00574">
    <property type="reaction ID" value="UER00637"/>
</dbReference>
<dbReference type="UniPathway" id="UPA00579">
    <property type="reaction ID" value="UER00640"/>
</dbReference>
<dbReference type="Proteomes" id="UP000008143">
    <property type="component" value="Chromosome 4"/>
</dbReference>
<dbReference type="Bgee" id="ENSXETG00000017357">
    <property type="expression patterns" value="Expressed in egg cell and 14 other cell types or tissues"/>
</dbReference>
<dbReference type="ExpressionAtlas" id="B1H116">
    <property type="expression patterns" value="baseline and differential"/>
</dbReference>
<dbReference type="GO" id="GO:0005524">
    <property type="term" value="F:ATP binding"/>
    <property type="evidence" value="ECO:0007669"/>
    <property type="project" value="UniProtKB-KW"/>
</dbReference>
<dbReference type="GO" id="GO:0043771">
    <property type="term" value="F:cytidine kinase activity"/>
    <property type="evidence" value="ECO:0000250"/>
    <property type="project" value="UniProtKB"/>
</dbReference>
<dbReference type="GO" id="GO:0004849">
    <property type="term" value="F:uridine kinase activity"/>
    <property type="evidence" value="ECO:0000250"/>
    <property type="project" value="UniProtKB"/>
</dbReference>
<dbReference type="GO" id="GO:0044211">
    <property type="term" value="P:CTP salvage"/>
    <property type="evidence" value="ECO:0000250"/>
    <property type="project" value="UniProtKB"/>
</dbReference>
<dbReference type="GO" id="GO:0044206">
    <property type="term" value="P:UMP salvage"/>
    <property type="evidence" value="ECO:0000250"/>
    <property type="project" value="UniProtKB"/>
</dbReference>
<dbReference type="CDD" id="cd02023">
    <property type="entry name" value="UMPK"/>
    <property type="match status" value="1"/>
</dbReference>
<dbReference type="FunFam" id="3.40.50.300:FF:000297">
    <property type="entry name" value="Uridine-cytidine kinase 2"/>
    <property type="match status" value="1"/>
</dbReference>
<dbReference type="Gene3D" id="3.40.50.300">
    <property type="entry name" value="P-loop containing nucleotide triphosphate hydrolases"/>
    <property type="match status" value="1"/>
</dbReference>
<dbReference type="InterPro" id="IPR027417">
    <property type="entry name" value="P-loop_NTPase"/>
</dbReference>
<dbReference type="InterPro" id="IPR006083">
    <property type="entry name" value="PRK/URK"/>
</dbReference>
<dbReference type="InterPro" id="IPR000764">
    <property type="entry name" value="Uridine_kinase-like"/>
</dbReference>
<dbReference type="NCBIfam" id="NF004018">
    <property type="entry name" value="PRK05480.1"/>
    <property type="match status" value="1"/>
</dbReference>
<dbReference type="NCBIfam" id="TIGR00235">
    <property type="entry name" value="udk"/>
    <property type="match status" value="1"/>
</dbReference>
<dbReference type="PANTHER" id="PTHR10285">
    <property type="entry name" value="URIDINE KINASE"/>
    <property type="match status" value="1"/>
</dbReference>
<dbReference type="Pfam" id="PF00485">
    <property type="entry name" value="PRK"/>
    <property type="match status" value="1"/>
</dbReference>
<dbReference type="PRINTS" id="PR00988">
    <property type="entry name" value="URIDINKINASE"/>
</dbReference>
<dbReference type="SUPFAM" id="SSF52540">
    <property type="entry name" value="P-loop containing nucleoside triphosphate hydrolases"/>
    <property type="match status" value="1"/>
</dbReference>